<dbReference type="EMBL" id="CP001055">
    <property type="protein sequence ID" value="ACC98940.1"/>
    <property type="molecule type" value="Genomic_DNA"/>
</dbReference>
<dbReference type="RefSeq" id="WP_012415555.1">
    <property type="nucleotide sequence ID" value="NC_010644.1"/>
</dbReference>
<dbReference type="SMR" id="B2KEJ4"/>
<dbReference type="STRING" id="445932.Emin_1391"/>
<dbReference type="KEGG" id="emi:Emin_1391"/>
<dbReference type="HOGENOM" id="CLU_092403_0_2_0"/>
<dbReference type="OrthoDB" id="9803672at2"/>
<dbReference type="Proteomes" id="UP000001029">
    <property type="component" value="Chromosome"/>
</dbReference>
<dbReference type="GO" id="GO:0015935">
    <property type="term" value="C:small ribosomal subunit"/>
    <property type="evidence" value="ECO:0007669"/>
    <property type="project" value="InterPro"/>
</dbReference>
<dbReference type="GO" id="GO:0019843">
    <property type="term" value="F:rRNA binding"/>
    <property type="evidence" value="ECO:0007669"/>
    <property type="project" value="UniProtKB-UniRule"/>
</dbReference>
<dbReference type="GO" id="GO:0003735">
    <property type="term" value="F:structural constituent of ribosome"/>
    <property type="evidence" value="ECO:0007669"/>
    <property type="project" value="InterPro"/>
</dbReference>
<dbReference type="GO" id="GO:0042274">
    <property type="term" value="P:ribosomal small subunit biogenesis"/>
    <property type="evidence" value="ECO:0007669"/>
    <property type="project" value="TreeGrafter"/>
</dbReference>
<dbReference type="GO" id="GO:0006412">
    <property type="term" value="P:translation"/>
    <property type="evidence" value="ECO:0007669"/>
    <property type="project" value="UniProtKB-UniRule"/>
</dbReference>
<dbReference type="CDD" id="cd00165">
    <property type="entry name" value="S4"/>
    <property type="match status" value="1"/>
</dbReference>
<dbReference type="FunFam" id="3.10.290.10:FF:000001">
    <property type="entry name" value="30S ribosomal protein S4"/>
    <property type="match status" value="1"/>
</dbReference>
<dbReference type="Gene3D" id="1.10.1050.10">
    <property type="entry name" value="Ribosomal Protein S4 Delta 41, Chain A, domain 1"/>
    <property type="match status" value="1"/>
</dbReference>
<dbReference type="Gene3D" id="3.10.290.10">
    <property type="entry name" value="RNA-binding S4 domain"/>
    <property type="match status" value="1"/>
</dbReference>
<dbReference type="HAMAP" id="MF_01306_B">
    <property type="entry name" value="Ribosomal_uS4_B"/>
    <property type="match status" value="1"/>
</dbReference>
<dbReference type="InterPro" id="IPR022801">
    <property type="entry name" value="Ribosomal_uS4"/>
</dbReference>
<dbReference type="InterPro" id="IPR005709">
    <property type="entry name" value="Ribosomal_uS4_bac-type"/>
</dbReference>
<dbReference type="InterPro" id="IPR018079">
    <property type="entry name" value="Ribosomal_uS4_CS"/>
</dbReference>
<dbReference type="InterPro" id="IPR001912">
    <property type="entry name" value="Ribosomal_uS4_N"/>
</dbReference>
<dbReference type="InterPro" id="IPR002942">
    <property type="entry name" value="S4_RNA-bd"/>
</dbReference>
<dbReference type="InterPro" id="IPR036986">
    <property type="entry name" value="S4_RNA-bd_sf"/>
</dbReference>
<dbReference type="NCBIfam" id="NF003717">
    <property type="entry name" value="PRK05327.1"/>
    <property type="match status" value="1"/>
</dbReference>
<dbReference type="NCBIfam" id="TIGR01017">
    <property type="entry name" value="rpsD_bact"/>
    <property type="match status" value="1"/>
</dbReference>
<dbReference type="PANTHER" id="PTHR11831">
    <property type="entry name" value="30S 40S RIBOSOMAL PROTEIN"/>
    <property type="match status" value="1"/>
</dbReference>
<dbReference type="PANTHER" id="PTHR11831:SF4">
    <property type="entry name" value="SMALL RIBOSOMAL SUBUNIT PROTEIN US4M"/>
    <property type="match status" value="1"/>
</dbReference>
<dbReference type="Pfam" id="PF00163">
    <property type="entry name" value="Ribosomal_S4"/>
    <property type="match status" value="1"/>
</dbReference>
<dbReference type="Pfam" id="PF01479">
    <property type="entry name" value="S4"/>
    <property type="match status" value="1"/>
</dbReference>
<dbReference type="SMART" id="SM01390">
    <property type="entry name" value="Ribosomal_S4"/>
    <property type="match status" value="1"/>
</dbReference>
<dbReference type="SMART" id="SM00363">
    <property type="entry name" value="S4"/>
    <property type="match status" value="1"/>
</dbReference>
<dbReference type="SUPFAM" id="SSF55174">
    <property type="entry name" value="Alpha-L RNA-binding motif"/>
    <property type="match status" value="1"/>
</dbReference>
<dbReference type="PROSITE" id="PS00632">
    <property type="entry name" value="RIBOSOMAL_S4"/>
    <property type="match status" value="1"/>
</dbReference>
<dbReference type="PROSITE" id="PS50889">
    <property type="entry name" value="S4"/>
    <property type="match status" value="1"/>
</dbReference>
<gene>
    <name evidence="1" type="primary">rpsD</name>
    <name type="ordered locus">Emin_1391</name>
</gene>
<accession>B2KEJ4</accession>
<sequence>MARYIGPKTKIARKFGEPIFGPDKSLIKSERAAGNNKHAPRKKKMSVFGTQLAEKQKAKYTYGLLEKQFSNLFTKAHSLPGVTGEVLMQLLECRLDNIVYRMGLARTRAAARQLVTHRHITVDGEIVKTPSYSVKPGQVISVTEGSKSLSMFEVNLKGYDHAKYSWIEWKEPVSAKYVRIPERAEIPENINEQLIVEHYSK</sequence>
<comment type="function">
    <text evidence="1">One of the primary rRNA binding proteins, it binds directly to 16S rRNA where it nucleates assembly of the body of the 30S subunit.</text>
</comment>
<comment type="function">
    <text evidence="1">With S5 and S12 plays an important role in translational accuracy.</text>
</comment>
<comment type="subunit">
    <text evidence="1">Part of the 30S ribosomal subunit. Contacts protein S5. The interaction surface between S4 and S5 is involved in control of translational fidelity.</text>
</comment>
<comment type="similarity">
    <text evidence="1">Belongs to the universal ribosomal protein uS4 family.</text>
</comment>
<evidence type="ECO:0000255" key="1">
    <source>
        <dbReference type="HAMAP-Rule" id="MF_01306"/>
    </source>
</evidence>
<evidence type="ECO:0000305" key="2"/>
<feature type="chain" id="PRO_1000140732" description="Small ribosomal subunit protein uS4">
    <location>
        <begin position="1"/>
        <end position="201"/>
    </location>
</feature>
<feature type="domain" description="S4 RNA-binding" evidence="1">
    <location>
        <begin position="93"/>
        <end position="155"/>
    </location>
</feature>
<reference key="1">
    <citation type="journal article" date="2009" name="Appl. Environ. Microbiol.">
        <title>Genomic analysis of 'Elusimicrobium minutum,' the first cultivated representative of the phylum 'Elusimicrobia' (formerly termite group 1).</title>
        <authorList>
            <person name="Herlemann D.P.R."/>
            <person name="Geissinger O."/>
            <person name="Ikeda-Ohtsubo W."/>
            <person name="Kunin V."/>
            <person name="Sun H."/>
            <person name="Lapidus A."/>
            <person name="Hugenholtz P."/>
            <person name="Brune A."/>
        </authorList>
    </citation>
    <scope>NUCLEOTIDE SEQUENCE [LARGE SCALE GENOMIC DNA]</scope>
    <source>
        <strain>Pei191</strain>
    </source>
</reference>
<organism>
    <name type="scientific">Elusimicrobium minutum (strain Pei191)</name>
    <dbReference type="NCBI Taxonomy" id="445932"/>
    <lineage>
        <taxon>Bacteria</taxon>
        <taxon>Pseudomonadati</taxon>
        <taxon>Elusimicrobiota</taxon>
        <taxon>Elusimicrobia</taxon>
        <taxon>Elusimicrobiales</taxon>
        <taxon>Elusimicrobiaceae</taxon>
        <taxon>Elusimicrobium</taxon>
    </lineage>
</organism>
<protein>
    <recommendedName>
        <fullName evidence="1">Small ribosomal subunit protein uS4</fullName>
    </recommendedName>
    <alternativeName>
        <fullName evidence="2">30S ribosomal protein S4</fullName>
    </alternativeName>
</protein>
<name>RS4_ELUMP</name>
<proteinExistence type="inferred from homology"/>
<keyword id="KW-1185">Reference proteome</keyword>
<keyword id="KW-0687">Ribonucleoprotein</keyword>
<keyword id="KW-0689">Ribosomal protein</keyword>
<keyword id="KW-0694">RNA-binding</keyword>
<keyword id="KW-0699">rRNA-binding</keyword>